<keyword id="KW-0963">Cytoplasm</keyword>
<keyword id="KW-0456">Lyase</keyword>
<keyword id="KW-0704">Schiff base</keyword>
<sequence length="221" mass="23999">MNNAEILKHVDHTLLKPVATWDDIKKICDESIEYNTASICIPACYISRIHATYGDKVNICTVVGFPLGYSSTEGKIAETKQALADGANEIDMVINISDVKNKAYDKVTEEIRALKEVVGNKILKVIIETCYLTEEEKIAMCKAVTEAGADYIKTSTGFGTGGATLEDIKLFKKHIGPNVKIKAAGGVSTVEDLNMFINEGCDRLGTSRAVGLLKGEETQGY</sequence>
<comment type="function">
    <text evidence="1">Catalyzes a reversible aldol reaction between acetaldehyde and D-glyceraldehyde 3-phosphate to generate 2-deoxy-D-ribose 5-phosphate.</text>
</comment>
<comment type="catalytic activity">
    <reaction evidence="1">
        <text>2-deoxy-D-ribose 5-phosphate = D-glyceraldehyde 3-phosphate + acetaldehyde</text>
        <dbReference type="Rhea" id="RHEA:12821"/>
        <dbReference type="ChEBI" id="CHEBI:15343"/>
        <dbReference type="ChEBI" id="CHEBI:59776"/>
        <dbReference type="ChEBI" id="CHEBI:62877"/>
        <dbReference type="EC" id="4.1.2.4"/>
    </reaction>
</comment>
<comment type="pathway">
    <text evidence="1">Carbohydrate degradation; 2-deoxy-D-ribose 1-phosphate degradation; D-glyceraldehyde 3-phosphate and acetaldehyde from 2-deoxy-alpha-D-ribose 1-phosphate: step 2/2.</text>
</comment>
<comment type="subcellular location">
    <subcellularLocation>
        <location evidence="1">Cytoplasm</location>
    </subcellularLocation>
</comment>
<comment type="similarity">
    <text evidence="1">Belongs to the DeoC/FbaB aldolase family. DeoC type 1 subfamily.</text>
</comment>
<evidence type="ECO:0000255" key="1">
    <source>
        <dbReference type="HAMAP-Rule" id="MF_00114"/>
    </source>
</evidence>
<reference key="1">
    <citation type="submission" date="2008-04" db="EMBL/GenBank/DDBJ databases">
        <title>Complete sequence of Clostridium botulinum strain Eklund.</title>
        <authorList>
            <person name="Brinkac L.M."/>
            <person name="Brown J.L."/>
            <person name="Bruce D."/>
            <person name="Detter C."/>
            <person name="Munk C."/>
            <person name="Smith L.A."/>
            <person name="Smith T.J."/>
            <person name="Sutton G."/>
            <person name="Brettin T.S."/>
        </authorList>
    </citation>
    <scope>NUCLEOTIDE SEQUENCE [LARGE SCALE GENOMIC DNA]</scope>
    <source>
        <strain>Eklund 17B / Type B</strain>
    </source>
</reference>
<protein>
    <recommendedName>
        <fullName evidence="1">Deoxyribose-phosphate aldolase</fullName>
        <shortName evidence="1">DERA</shortName>
        <ecNumber evidence="1">4.1.2.4</ecNumber>
    </recommendedName>
    <alternativeName>
        <fullName evidence="1">2-deoxy-D-ribose 5-phosphate aldolase</fullName>
    </alternativeName>
    <alternativeName>
        <fullName evidence="1">Phosphodeoxyriboaldolase</fullName>
        <shortName evidence="1">Deoxyriboaldolase</shortName>
    </alternativeName>
</protein>
<accession>B2TL86</accession>
<feature type="chain" id="PRO_1000094840" description="Deoxyribose-phosphate aldolase">
    <location>
        <begin position="1"/>
        <end position="221"/>
    </location>
</feature>
<feature type="active site" description="Proton donor/acceptor" evidence="1">
    <location>
        <position position="91"/>
    </location>
</feature>
<feature type="active site" description="Schiff-base intermediate with acetaldehyde" evidence="1">
    <location>
        <position position="153"/>
    </location>
</feature>
<feature type="active site" description="Proton donor/acceptor" evidence="1">
    <location>
        <position position="182"/>
    </location>
</feature>
<gene>
    <name evidence="1" type="primary">deoC</name>
    <name type="ordered locus">CLL_A0734</name>
</gene>
<dbReference type="EC" id="4.1.2.4" evidence="1"/>
<dbReference type="EMBL" id="CP001056">
    <property type="protein sequence ID" value="ACD22952.1"/>
    <property type="molecule type" value="Genomic_DNA"/>
</dbReference>
<dbReference type="SMR" id="B2TL86"/>
<dbReference type="KEGG" id="cbk:CLL_A0734"/>
<dbReference type="PATRIC" id="fig|935198.13.peg.680"/>
<dbReference type="HOGENOM" id="CLU_053595_0_1_9"/>
<dbReference type="UniPathway" id="UPA00002">
    <property type="reaction ID" value="UER00468"/>
</dbReference>
<dbReference type="Proteomes" id="UP000001195">
    <property type="component" value="Chromosome"/>
</dbReference>
<dbReference type="GO" id="GO:0005737">
    <property type="term" value="C:cytoplasm"/>
    <property type="evidence" value="ECO:0007669"/>
    <property type="project" value="UniProtKB-SubCell"/>
</dbReference>
<dbReference type="GO" id="GO:0004139">
    <property type="term" value="F:deoxyribose-phosphate aldolase activity"/>
    <property type="evidence" value="ECO:0007669"/>
    <property type="project" value="UniProtKB-UniRule"/>
</dbReference>
<dbReference type="GO" id="GO:0006018">
    <property type="term" value="P:2-deoxyribose 1-phosphate catabolic process"/>
    <property type="evidence" value="ECO:0007669"/>
    <property type="project" value="UniProtKB-UniRule"/>
</dbReference>
<dbReference type="GO" id="GO:0016052">
    <property type="term" value="P:carbohydrate catabolic process"/>
    <property type="evidence" value="ECO:0007669"/>
    <property type="project" value="TreeGrafter"/>
</dbReference>
<dbReference type="GO" id="GO:0009264">
    <property type="term" value="P:deoxyribonucleotide catabolic process"/>
    <property type="evidence" value="ECO:0007669"/>
    <property type="project" value="InterPro"/>
</dbReference>
<dbReference type="CDD" id="cd00959">
    <property type="entry name" value="DeoC"/>
    <property type="match status" value="1"/>
</dbReference>
<dbReference type="FunFam" id="3.20.20.70:FF:000044">
    <property type="entry name" value="Deoxyribose-phosphate aldolase"/>
    <property type="match status" value="1"/>
</dbReference>
<dbReference type="Gene3D" id="3.20.20.70">
    <property type="entry name" value="Aldolase class I"/>
    <property type="match status" value="1"/>
</dbReference>
<dbReference type="HAMAP" id="MF_00114">
    <property type="entry name" value="DeoC_type1"/>
    <property type="match status" value="1"/>
</dbReference>
<dbReference type="InterPro" id="IPR013785">
    <property type="entry name" value="Aldolase_TIM"/>
</dbReference>
<dbReference type="InterPro" id="IPR011343">
    <property type="entry name" value="DeoC"/>
</dbReference>
<dbReference type="InterPro" id="IPR002915">
    <property type="entry name" value="DeoC/FbaB/LacD_aldolase"/>
</dbReference>
<dbReference type="InterPro" id="IPR028581">
    <property type="entry name" value="DeoC_typeI"/>
</dbReference>
<dbReference type="NCBIfam" id="TIGR00126">
    <property type="entry name" value="deoC"/>
    <property type="match status" value="1"/>
</dbReference>
<dbReference type="PANTHER" id="PTHR10889">
    <property type="entry name" value="DEOXYRIBOSE-PHOSPHATE ALDOLASE"/>
    <property type="match status" value="1"/>
</dbReference>
<dbReference type="PANTHER" id="PTHR10889:SF1">
    <property type="entry name" value="DEOXYRIBOSE-PHOSPHATE ALDOLASE"/>
    <property type="match status" value="1"/>
</dbReference>
<dbReference type="Pfam" id="PF01791">
    <property type="entry name" value="DeoC"/>
    <property type="match status" value="1"/>
</dbReference>
<dbReference type="PIRSF" id="PIRSF001357">
    <property type="entry name" value="DeoC"/>
    <property type="match status" value="1"/>
</dbReference>
<dbReference type="SMART" id="SM01133">
    <property type="entry name" value="DeoC"/>
    <property type="match status" value="1"/>
</dbReference>
<dbReference type="SUPFAM" id="SSF51569">
    <property type="entry name" value="Aldolase"/>
    <property type="match status" value="1"/>
</dbReference>
<name>DEOC_CLOBB</name>
<proteinExistence type="inferred from homology"/>
<organism>
    <name type="scientific">Clostridium botulinum (strain Eklund 17B / Type B)</name>
    <dbReference type="NCBI Taxonomy" id="935198"/>
    <lineage>
        <taxon>Bacteria</taxon>
        <taxon>Bacillati</taxon>
        <taxon>Bacillota</taxon>
        <taxon>Clostridia</taxon>
        <taxon>Eubacteriales</taxon>
        <taxon>Clostridiaceae</taxon>
        <taxon>Clostridium</taxon>
    </lineage>
</organism>